<gene>
    <name evidence="1" type="primary">psaA</name>
    <name type="ordered locus">Npun_F3818</name>
</gene>
<keyword id="KW-0004">4Fe-4S</keyword>
<keyword id="KW-0148">Chlorophyll</keyword>
<keyword id="KW-0157">Chromophore</keyword>
<keyword id="KW-0249">Electron transport</keyword>
<keyword id="KW-0408">Iron</keyword>
<keyword id="KW-0411">Iron-sulfur</keyword>
<keyword id="KW-0460">Magnesium</keyword>
<keyword id="KW-0472">Membrane</keyword>
<keyword id="KW-0479">Metal-binding</keyword>
<keyword id="KW-0560">Oxidoreductase</keyword>
<keyword id="KW-0602">Photosynthesis</keyword>
<keyword id="KW-0603">Photosystem I</keyword>
<keyword id="KW-1185">Reference proteome</keyword>
<keyword id="KW-0793">Thylakoid</keyword>
<keyword id="KW-0812">Transmembrane</keyword>
<keyword id="KW-1133">Transmembrane helix</keyword>
<keyword id="KW-0813">Transport</keyword>
<accession>B2J490</accession>
<name>PSAA_NOSP7</name>
<proteinExistence type="inferred from homology"/>
<protein>
    <recommendedName>
        <fullName evidence="1">Photosystem I P700 chlorophyll a apoprotein A1</fullName>
        <ecNumber evidence="1">1.97.1.12</ecNumber>
    </recommendedName>
    <alternativeName>
        <fullName evidence="1">PsaA</fullName>
    </alternativeName>
</protein>
<reference key="1">
    <citation type="journal article" date="2013" name="Plant Physiol.">
        <title>A Nostoc punctiforme Sugar Transporter Necessary to Establish a Cyanobacterium-Plant Symbiosis.</title>
        <authorList>
            <person name="Ekman M."/>
            <person name="Picossi S."/>
            <person name="Campbell E.L."/>
            <person name="Meeks J.C."/>
            <person name="Flores E."/>
        </authorList>
    </citation>
    <scope>NUCLEOTIDE SEQUENCE [LARGE SCALE GENOMIC DNA]</scope>
    <source>
        <strain>ATCC 29133 / PCC 73102</strain>
    </source>
</reference>
<sequence length="752" mass="83245">MTISPPEREEKKARVIVDNDPVPTSFERWAKPGHFDRSLARGPKTTTWIWNLHALAHDFDTHTSDLEDISRKIFSAHFGHLAVVMVWLSGMIFHGAKFSNYEAWLSDPLNVKPSAQVVWPIVGQDILNGDVGGGFHGIQITSGLFQVWRGWGITNSFQLYVTAIGGLVLAGLFLFAGWFHYHKRAPKLEWFQNVESMLNHHLQVLLGCGSLGWAGHLIHVSAPTNKLLDAGVALKDIPLPHEFILNKDLLTELYPSFAAGLAPFFTLNWGQYADFLTFKGGLNPVTGGLWMTDIAHHHLAIAVLFIVAGHQYRTNWGIGHSIREILENHKGPFTGEGHKGLYENLTTSWHAQLATNLAFLGSLTIIIAHHMYAMPPYPYLATDYATQLCIFTHHIWIGGFLIVGGAAHAAIFMVRDYDPVVNQNNVLDRVLRHRDAIISHLNWVCIFLGFHSFGLYIHNDTMRALGRPQDLFSDTGIQLQPVFAQWIQNIHALAPGTTAPNALEPVSYVFGGGILAVGGKVAAAPIALGTADFLIHHIHAFTIHVTVLILLKGVLYARSSRLIPDKANLGFRFPCDGPGRGGTCQVSGWDHVFLGLFWMYNSLSIVIFHFSWKMQSDVWGTVDADGTVTHITGGNFAQSAITINGWLRDFLWAQATQVINSYGSALSAYGLLFLGAHFVWAFSLMFLFSGRGYWQELIESIVWAHNKLKVAPAIQPRALSIIQGRAVGVAHYLLGGIATTWAFFHAHILSVG</sequence>
<dbReference type="EC" id="1.97.1.12" evidence="1"/>
<dbReference type="EMBL" id="CP001037">
    <property type="protein sequence ID" value="ACC82202.1"/>
    <property type="molecule type" value="Genomic_DNA"/>
</dbReference>
<dbReference type="RefSeq" id="WP_012410173.1">
    <property type="nucleotide sequence ID" value="NC_010628.1"/>
</dbReference>
<dbReference type="SMR" id="B2J490"/>
<dbReference type="STRING" id="63737.Npun_F3818"/>
<dbReference type="EnsemblBacteria" id="ACC82202">
    <property type="protein sequence ID" value="ACC82202"/>
    <property type="gene ID" value="Npun_F3818"/>
</dbReference>
<dbReference type="KEGG" id="npu:Npun_F3818"/>
<dbReference type="eggNOG" id="COG2885">
    <property type="taxonomic scope" value="Bacteria"/>
</dbReference>
<dbReference type="HOGENOM" id="CLU_016126_1_0_3"/>
<dbReference type="OrthoDB" id="499313at2"/>
<dbReference type="PhylomeDB" id="B2J490"/>
<dbReference type="Proteomes" id="UP000001191">
    <property type="component" value="Chromosome"/>
</dbReference>
<dbReference type="GO" id="GO:0009522">
    <property type="term" value="C:photosystem I"/>
    <property type="evidence" value="ECO:0007669"/>
    <property type="project" value="UniProtKB-KW"/>
</dbReference>
<dbReference type="GO" id="GO:0031676">
    <property type="term" value="C:plasma membrane-derived thylakoid membrane"/>
    <property type="evidence" value="ECO:0007669"/>
    <property type="project" value="UniProtKB-SubCell"/>
</dbReference>
<dbReference type="GO" id="GO:0051539">
    <property type="term" value="F:4 iron, 4 sulfur cluster binding"/>
    <property type="evidence" value="ECO:0007669"/>
    <property type="project" value="UniProtKB-KW"/>
</dbReference>
<dbReference type="GO" id="GO:0016168">
    <property type="term" value="F:chlorophyll binding"/>
    <property type="evidence" value="ECO:0007669"/>
    <property type="project" value="UniProtKB-KW"/>
</dbReference>
<dbReference type="GO" id="GO:0009055">
    <property type="term" value="F:electron transfer activity"/>
    <property type="evidence" value="ECO:0007669"/>
    <property type="project" value="UniProtKB-UniRule"/>
</dbReference>
<dbReference type="GO" id="GO:0000287">
    <property type="term" value="F:magnesium ion binding"/>
    <property type="evidence" value="ECO:0007669"/>
    <property type="project" value="UniProtKB-UniRule"/>
</dbReference>
<dbReference type="GO" id="GO:0016491">
    <property type="term" value="F:oxidoreductase activity"/>
    <property type="evidence" value="ECO:0007669"/>
    <property type="project" value="UniProtKB-KW"/>
</dbReference>
<dbReference type="GO" id="GO:0015979">
    <property type="term" value="P:photosynthesis"/>
    <property type="evidence" value="ECO:0007669"/>
    <property type="project" value="UniProtKB-UniRule"/>
</dbReference>
<dbReference type="Gene3D" id="1.20.1130.10">
    <property type="entry name" value="Photosystem I PsaA/PsaB"/>
    <property type="match status" value="1"/>
</dbReference>
<dbReference type="HAMAP" id="MF_00458">
    <property type="entry name" value="PSI_PsaA"/>
    <property type="match status" value="1"/>
</dbReference>
<dbReference type="InterPro" id="IPR006243">
    <property type="entry name" value="PSI_PsaA"/>
</dbReference>
<dbReference type="InterPro" id="IPR001280">
    <property type="entry name" value="PSI_PsaA/B"/>
</dbReference>
<dbReference type="InterPro" id="IPR020586">
    <property type="entry name" value="PSI_PsaA/B_CS"/>
</dbReference>
<dbReference type="InterPro" id="IPR036408">
    <property type="entry name" value="PSI_PsaA/B_sf"/>
</dbReference>
<dbReference type="NCBIfam" id="TIGR01335">
    <property type="entry name" value="psaA"/>
    <property type="match status" value="1"/>
</dbReference>
<dbReference type="PANTHER" id="PTHR30128">
    <property type="entry name" value="OUTER MEMBRANE PROTEIN, OMPA-RELATED"/>
    <property type="match status" value="1"/>
</dbReference>
<dbReference type="PANTHER" id="PTHR30128:SF19">
    <property type="entry name" value="PHOTOSYSTEM I P700 CHLOROPHYLL A APOPROTEIN A1-RELATED"/>
    <property type="match status" value="1"/>
</dbReference>
<dbReference type="Pfam" id="PF00223">
    <property type="entry name" value="PsaA_PsaB"/>
    <property type="match status" value="1"/>
</dbReference>
<dbReference type="PIRSF" id="PIRSF002905">
    <property type="entry name" value="PSI_A"/>
    <property type="match status" value="1"/>
</dbReference>
<dbReference type="PRINTS" id="PR00257">
    <property type="entry name" value="PHOTSYSPSAAB"/>
</dbReference>
<dbReference type="SUPFAM" id="SSF81558">
    <property type="entry name" value="Photosystem I subunits PsaA/PsaB"/>
    <property type="match status" value="1"/>
</dbReference>
<dbReference type="PROSITE" id="PS00419">
    <property type="entry name" value="PHOTOSYSTEM_I_PSAAB"/>
    <property type="match status" value="1"/>
</dbReference>
<feature type="chain" id="PRO_1000201162" description="Photosystem I P700 chlorophyll a apoprotein A1">
    <location>
        <begin position="1"/>
        <end position="752"/>
    </location>
</feature>
<feature type="transmembrane region" description="Helical; Name=I" evidence="1">
    <location>
        <begin position="73"/>
        <end position="96"/>
    </location>
</feature>
<feature type="transmembrane region" description="Helical; Name=II" evidence="1">
    <location>
        <begin position="159"/>
        <end position="182"/>
    </location>
</feature>
<feature type="transmembrane region" description="Helical; Name=III" evidence="1">
    <location>
        <begin position="198"/>
        <end position="222"/>
    </location>
</feature>
<feature type="transmembrane region" description="Helical; Name=IV" evidence="1">
    <location>
        <begin position="294"/>
        <end position="312"/>
    </location>
</feature>
<feature type="transmembrane region" description="Helical; Name=V" evidence="1">
    <location>
        <begin position="349"/>
        <end position="372"/>
    </location>
</feature>
<feature type="transmembrane region" description="Helical; Name=VI" evidence="1">
    <location>
        <begin position="388"/>
        <end position="414"/>
    </location>
</feature>
<feature type="transmembrane region" description="Helical; Name=VII" evidence="1">
    <location>
        <begin position="436"/>
        <end position="458"/>
    </location>
</feature>
<feature type="transmembrane region" description="Helical; Name=VIII" evidence="1">
    <location>
        <begin position="533"/>
        <end position="551"/>
    </location>
</feature>
<feature type="transmembrane region" description="Helical; Name=IX" evidence="1">
    <location>
        <begin position="591"/>
        <end position="612"/>
    </location>
</feature>
<feature type="transmembrane region" description="Helical; Name=X" evidence="1">
    <location>
        <begin position="666"/>
        <end position="688"/>
    </location>
</feature>
<feature type="transmembrane region" description="Helical; Name=XI" evidence="1">
    <location>
        <begin position="726"/>
        <end position="746"/>
    </location>
</feature>
<feature type="binding site" evidence="1">
    <location>
        <position position="575"/>
    </location>
    <ligand>
        <name>[4Fe-4S] cluster</name>
        <dbReference type="ChEBI" id="CHEBI:49883"/>
        <note>ligand shared between dimeric partners</note>
    </ligand>
</feature>
<feature type="binding site" evidence="1">
    <location>
        <position position="584"/>
    </location>
    <ligand>
        <name>[4Fe-4S] cluster</name>
        <dbReference type="ChEBI" id="CHEBI:49883"/>
        <note>ligand shared between dimeric partners</note>
    </ligand>
</feature>
<feature type="binding site" description="axial binding residue" evidence="1">
    <location>
        <position position="677"/>
    </location>
    <ligand>
        <name>chlorophyll a'</name>
        <dbReference type="ChEBI" id="CHEBI:189419"/>
        <label>A1</label>
    </ligand>
    <ligandPart>
        <name>Mg</name>
        <dbReference type="ChEBI" id="CHEBI:25107"/>
    </ligandPart>
</feature>
<feature type="binding site" description="axial binding residue" evidence="1">
    <location>
        <position position="685"/>
    </location>
    <ligand>
        <name>chlorophyll a</name>
        <dbReference type="ChEBI" id="CHEBI:58416"/>
        <label>A3</label>
    </ligand>
    <ligandPart>
        <name>Mg</name>
        <dbReference type="ChEBI" id="CHEBI:25107"/>
    </ligandPart>
</feature>
<feature type="binding site" evidence="1">
    <location>
        <position position="693"/>
    </location>
    <ligand>
        <name>chlorophyll a</name>
        <dbReference type="ChEBI" id="CHEBI:58416"/>
        <label>A3</label>
    </ligand>
</feature>
<feature type="binding site" evidence="1">
    <location>
        <position position="694"/>
    </location>
    <ligand>
        <name>phylloquinone</name>
        <dbReference type="ChEBI" id="CHEBI:18067"/>
        <label>A</label>
    </ligand>
</feature>
<evidence type="ECO:0000255" key="1">
    <source>
        <dbReference type="HAMAP-Rule" id="MF_00458"/>
    </source>
</evidence>
<organism>
    <name type="scientific">Nostoc punctiforme (strain ATCC 29133 / PCC 73102)</name>
    <dbReference type="NCBI Taxonomy" id="63737"/>
    <lineage>
        <taxon>Bacteria</taxon>
        <taxon>Bacillati</taxon>
        <taxon>Cyanobacteriota</taxon>
        <taxon>Cyanophyceae</taxon>
        <taxon>Nostocales</taxon>
        <taxon>Nostocaceae</taxon>
        <taxon>Nostoc</taxon>
    </lineage>
</organism>
<comment type="function">
    <text evidence="1">PsaA and PsaB bind P700, the primary electron donor of photosystem I (PSI), as well as the electron acceptors A0, A1 and FX. PSI is a plastocyanin/cytochrome c6-ferredoxin oxidoreductase, converting photonic excitation into a charge separation, which transfers an electron from the donor P700 chlorophyll pair to the spectroscopically characterized acceptors A0, A1, FX, FA and FB in turn. Oxidized P700 is reduced on the lumenal side of the thylakoid membrane by plastocyanin or cytochrome c6.</text>
</comment>
<comment type="catalytic activity">
    <reaction evidence="1">
        <text>reduced [plastocyanin] + hnu + oxidized [2Fe-2S]-[ferredoxin] = oxidized [plastocyanin] + reduced [2Fe-2S]-[ferredoxin]</text>
        <dbReference type="Rhea" id="RHEA:30407"/>
        <dbReference type="Rhea" id="RHEA-COMP:10000"/>
        <dbReference type="Rhea" id="RHEA-COMP:10001"/>
        <dbReference type="Rhea" id="RHEA-COMP:10039"/>
        <dbReference type="Rhea" id="RHEA-COMP:10040"/>
        <dbReference type="ChEBI" id="CHEBI:29036"/>
        <dbReference type="ChEBI" id="CHEBI:30212"/>
        <dbReference type="ChEBI" id="CHEBI:33737"/>
        <dbReference type="ChEBI" id="CHEBI:33738"/>
        <dbReference type="ChEBI" id="CHEBI:49552"/>
        <dbReference type="EC" id="1.97.1.12"/>
    </reaction>
</comment>
<comment type="cofactor">
    <text evidence="1">PSI electron transfer chain: 5 chlorophyll a, 1 chlorophyll a', 2 phylloquinones and 3 4Fe-4S clusters. PSI core antenna: 90 chlorophyll a, 22 carotenoids, 3 phospholipids and 1 galactolipid. P700 is a chlorophyll a/chlorophyll a' dimer, A0 is one or more chlorophyll a, A1 is one or both phylloquinones and FX is a shared 4Fe-4S iron-sulfur center.</text>
</comment>
<comment type="subunit">
    <text evidence="1">The PsaA/B heterodimer binds the P700 chlorophyll special pair and subsequent electron acceptors. PSI consists of a core antenna complex that captures photons, and an electron transfer chain that converts photonic excitation into a charge separation. The cyanobacterial PSI reaction center is composed of one copy each of PsaA,B,C,D,E,F,I,J,K,L,M and X, and forms trimeric complexes.</text>
</comment>
<comment type="subcellular location">
    <subcellularLocation>
        <location evidence="1">Cellular thylakoid membrane</location>
        <topology evidence="1">Multi-pass membrane protein</topology>
    </subcellularLocation>
</comment>
<comment type="similarity">
    <text evidence="1">Belongs to the PsaA/PsaB family.</text>
</comment>